<dbReference type="EC" id="1.4.99.-" evidence="1"/>
<dbReference type="EMBL" id="CP001120">
    <property type="protein sequence ID" value="ACF69122.1"/>
    <property type="molecule type" value="Genomic_DNA"/>
</dbReference>
<dbReference type="RefSeq" id="WP_001266937.1">
    <property type="nucleotide sequence ID" value="NC_011083.1"/>
</dbReference>
<dbReference type="SMR" id="B4TKD3"/>
<dbReference type="KEGG" id="seh:SeHA_C2001"/>
<dbReference type="HOGENOM" id="CLU_007884_9_2_6"/>
<dbReference type="UniPathway" id="UPA00043">
    <property type="reaction ID" value="UER00498"/>
</dbReference>
<dbReference type="Proteomes" id="UP000001866">
    <property type="component" value="Chromosome"/>
</dbReference>
<dbReference type="GO" id="GO:0005737">
    <property type="term" value="C:cytoplasm"/>
    <property type="evidence" value="ECO:0007669"/>
    <property type="project" value="TreeGrafter"/>
</dbReference>
<dbReference type="GO" id="GO:0005886">
    <property type="term" value="C:plasma membrane"/>
    <property type="evidence" value="ECO:0007669"/>
    <property type="project" value="TreeGrafter"/>
</dbReference>
<dbReference type="GO" id="GO:0008718">
    <property type="term" value="F:D-amino-acid dehydrogenase activity"/>
    <property type="evidence" value="ECO:0007669"/>
    <property type="project" value="UniProtKB-UniRule"/>
</dbReference>
<dbReference type="GO" id="GO:0055130">
    <property type="term" value="P:D-alanine catabolic process"/>
    <property type="evidence" value="ECO:0007669"/>
    <property type="project" value="UniProtKB-UniPathway"/>
</dbReference>
<dbReference type="FunFam" id="3.50.50.60:FF:000020">
    <property type="entry name" value="D-amino acid dehydrogenase"/>
    <property type="match status" value="1"/>
</dbReference>
<dbReference type="Gene3D" id="3.30.9.10">
    <property type="entry name" value="D-Amino Acid Oxidase, subunit A, domain 2"/>
    <property type="match status" value="1"/>
</dbReference>
<dbReference type="Gene3D" id="3.50.50.60">
    <property type="entry name" value="FAD/NAD(P)-binding domain"/>
    <property type="match status" value="2"/>
</dbReference>
<dbReference type="HAMAP" id="MF_01202">
    <property type="entry name" value="DadA"/>
    <property type="match status" value="1"/>
</dbReference>
<dbReference type="InterPro" id="IPR023080">
    <property type="entry name" value="DadA"/>
</dbReference>
<dbReference type="InterPro" id="IPR006076">
    <property type="entry name" value="FAD-dep_OxRdtase"/>
</dbReference>
<dbReference type="InterPro" id="IPR036188">
    <property type="entry name" value="FAD/NAD-bd_sf"/>
</dbReference>
<dbReference type="NCBIfam" id="NF001933">
    <property type="entry name" value="PRK00711.1"/>
    <property type="match status" value="1"/>
</dbReference>
<dbReference type="PANTHER" id="PTHR13847:SF280">
    <property type="entry name" value="D-AMINO ACID DEHYDROGENASE"/>
    <property type="match status" value="1"/>
</dbReference>
<dbReference type="PANTHER" id="PTHR13847">
    <property type="entry name" value="SARCOSINE DEHYDROGENASE-RELATED"/>
    <property type="match status" value="1"/>
</dbReference>
<dbReference type="Pfam" id="PF01266">
    <property type="entry name" value="DAO"/>
    <property type="match status" value="1"/>
</dbReference>
<dbReference type="SUPFAM" id="SSF54373">
    <property type="entry name" value="FAD-linked reductases, C-terminal domain"/>
    <property type="match status" value="1"/>
</dbReference>
<dbReference type="SUPFAM" id="SSF51905">
    <property type="entry name" value="FAD/NAD(P)-binding domain"/>
    <property type="match status" value="1"/>
</dbReference>
<protein>
    <recommendedName>
        <fullName evidence="1">D-amino acid dehydrogenase</fullName>
        <ecNumber evidence="1">1.4.99.-</ecNumber>
    </recommendedName>
</protein>
<gene>
    <name evidence="1" type="primary">dadA</name>
    <name type="ordered locus">SeHA_C2001</name>
</gene>
<name>DADA_SALHS</name>
<organism>
    <name type="scientific">Salmonella heidelberg (strain SL476)</name>
    <dbReference type="NCBI Taxonomy" id="454169"/>
    <lineage>
        <taxon>Bacteria</taxon>
        <taxon>Pseudomonadati</taxon>
        <taxon>Pseudomonadota</taxon>
        <taxon>Gammaproteobacteria</taxon>
        <taxon>Enterobacterales</taxon>
        <taxon>Enterobacteriaceae</taxon>
        <taxon>Salmonella</taxon>
    </lineage>
</organism>
<accession>B4TKD3</accession>
<keyword id="KW-0274">FAD</keyword>
<keyword id="KW-0285">Flavoprotein</keyword>
<keyword id="KW-0560">Oxidoreductase</keyword>
<comment type="function">
    <text evidence="1">Oxidative deamination of D-amino acids.</text>
</comment>
<comment type="catalytic activity">
    <reaction evidence="1">
        <text>a D-alpha-amino acid + A + H2O = a 2-oxocarboxylate + AH2 + NH4(+)</text>
        <dbReference type="Rhea" id="RHEA:18125"/>
        <dbReference type="ChEBI" id="CHEBI:13193"/>
        <dbReference type="ChEBI" id="CHEBI:15377"/>
        <dbReference type="ChEBI" id="CHEBI:17499"/>
        <dbReference type="ChEBI" id="CHEBI:28938"/>
        <dbReference type="ChEBI" id="CHEBI:35179"/>
        <dbReference type="ChEBI" id="CHEBI:59871"/>
    </reaction>
</comment>
<comment type="cofactor">
    <cofactor evidence="1">
        <name>FAD</name>
        <dbReference type="ChEBI" id="CHEBI:57692"/>
    </cofactor>
</comment>
<comment type="pathway">
    <text>Amino-acid degradation; D-alanine degradation; NH(3) and pyruvate from D-alanine: step 1/1.</text>
</comment>
<comment type="similarity">
    <text evidence="1">Belongs to the DadA oxidoreductase family.</text>
</comment>
<evidence type="ECO:0000255" key="1">
    <source>
        <dbReference type="HAMAP-Rule" id="MF_01202"/>
    </source>
</evidence>
<reference key="1">
    <citation type="journal article" date="2011" name="J. Bacteriol.">
        <title>Comparative genomics of 28 Salmonella enterica isolates: evidence for CRISPR-mediated adaptive sublineage evolution.</title>
        <authorList>
            <person name="Fricke W.F."/>
            <person name="Mammel M.K."/>
            <person name="McDermott P.F."/>
            <person name="Tartera C."/>
            <person name="White D.G."/>
            <person name="Leclerc J.E."/>
            <person name="Ravel J."/>
            <person name="Cebula T.A."/>
        </authorList>
    </citation>
    <scope>NUCLEOTIDE SEQUENCE [LARGE SCALE GENOMIC DNA]</scope>
    <source>
        <strain>SL476</strain>
    </source>
</reference>
<sequence>MRVVILGSGVVGVTSAWYLSQAGHDVTVIDRESGPAQETSAANAGQISPGYAAPWAAPGVPLKAIKWMFQRHAPLAVRLDGTPFQLKWMWQMLRNCDTRHYMENKGRMVRLAEYSRDCLKTLRAATGIEYEGRQGGTLQLFRTAQQYENATRDIAVLEDAGVPYQLLESSRLAEVEPALAEVAHKLTGGLRLPNDETGDCQLFTQRLARMAEQAGVTFRFNTPVEKLLYENDQIYGVKCADEIIKADAYVMAFGSYSTAMLKGIVDIPVYPLKGYSLTIPIVEPDGAPVSTILDETYKIAITRFDKRIRVGGMAEIVGFNTDLLQPRRETLEMVVRDLFPRGGHIEQATFWTGLRPMTPDGTPVVGRTRYKNLWLNTGHGTLGWTMACGSGQLLSDILSGRTPAIPYDDLSVARYRSDFTPTPPQRLHSAHN</sequence>
<proteinExistence type="inferred from homology"/>
<feature type="chain" id="PRO_1000138666" description="D-amino acid dehydrogenase">
    <location>
        <begin position="1"/>
        <end position="432"/>
    </location>
</feature>
<feature type="binding site" evidence="1">
    <location>
        <begin position="3"/>
        <end position="17"/>
    </location>
    <ligand>
        <name>FAD</name>
        <dbReference type="ChEBI" id="CHEBI:57692"/>
    </ligand>
</feature>